<organism>
    <name type="scientific">Pseudomonas putida (strain GB-1)</name>
    <dbReference type="NCBI Taxonomy" id="76869"/>
    <lineage>
        <taxon>Bacteria</taxon>
        <taxon>Pseudomonadati</taxon>
        <taxon>Pseudomonadota</taxon>
        <taxon>Gammaproteobacteria</taxon>
        <taxon>Pseudomonadales</taxon>
        <taxon>Pseudomonadaceae</taxon>
        <taxon>Pseudomonas</taxon>
    </lineage>
</organism>
<protein>
    <recommendedName>
        <fullName evidence="1">Elongation factor Ts</fullName>
        <shortName evidence="1">EF-Ts</shortName>
    </recommendedName>
</protein>
<accession>B0KSA0</accession>
<reference key="1">
    <citation type="submission" date="2008-01" db="EMBL/GenBank/DDBJ databases">
        <title>Complete sequence of Pseudomonas putida GB-1.</title>
        <authorList>
            <consortium name="US DOE Joint Genome Institute"/>
            <person name="Copeland A."/>
            <person name="Lucas S."/>
            <person name="Lapidus A."/>
            <person name="Barry K."/>
            <person name="Glavina del Rio T."/>
            <person name="Dalin E."/>
            <person name="Tice H."/>
            <person name="Pitluck S."/>
            <person name="Bruce D."/>
            <person name="Goodwin L."/>
            <person name="Chertkov O."/>
            <person name="Brettin T."/>
            <person name="Detter J.C."/>
            <person name="Han C."/>
            <person name="Kuske C.R."/>
            <person name="Schmutz J."/>
            <person name="Larimer F."/>
            <person name="Land M."/>
            <person name="Hauser L."/>
            <person name="Kyrpides N."/>
            <person name="Kim E."/>
            <person name="McCarthy J.K."/>
            <person name="Richardson P."/>
        </authorList>
    </citation>
    <scope>NUCLEOTIDE SEQUENCE [LARGE SCALE GENOMIC DNA]</scope>
    <source>
        <strain>GB-1</strain>
    </source>
</reference>
<evidence type="ECO:0000255" key="1">
    <source>
        <dbReference type="HAMAP-Rule" id="MF_00050"/>
    </source>
</evidence>
<keyword id="KW-0963">Cytoplasm</keyword>
<keyword id="KW-0251">Elongation factor</keyword>
<keyword id="KW-0648">Protein biosynthesis</keyword>
<dbReference type="EMBL" id="CP000926">
    <property type="protein sequence ID" value="ABY97055.1"/>
    <property type="molecule type" value="Genomic_DNA"/>
</dbReference>
<dbReference type="RefSeq" id="WP_012270835.1">
    <property type="nucleotide sequence ID" value="NC_010322.1"/>
</dbReference>
<dbReference type="SMR" id="B0KSA0"/>
<dbReference type="KEGG" id="ppg:PputGB1_1147"/>
<dbReference type="eggNOG" id="COG0264">
    <property type="taxonomic scope" value="Bacteria"/>
</dbReference>
<dbReference type="HOGENOM" id="CLU_047155_0_2_6"/>
<dbReference type="Proteomes" id="UP000002157">
    <property type="component" value="Chromosome"/>
</dbReference>
<dbReference type="GO" id="GO:0005737">
    <property type="term" value="C:cytoplasm"/>
    <property type="evidence" value="ECO:0007669"/>
    <property type="project" value="UniProtKB-SubCell"/>
</dbReference>
<dbReference type="GO" id="GO:0003746">
    <property type="term" value="F:translation elongation factor activity"/>
    <property type="evidence" value="ECO:0007669"/>
    <property type="project" value="UniProtKB-UniRule"/>
</dbReference>
<dbReference type="CDD" id="cd14275">
    <property type="entry name" value="UBA_EF-Ts"/>
    <property type="match status" value="1"/>
</dbReference>
<dbReference type="FunFam" id="1.10.286.20:FF:000001">
    <property type="entry name" value="Elongation factor Ts"/>
    <property type="match status" value="1"/>
</dbReference>
<dbReference type="FunFam" id="1.10.8.10:FF:000001">
    <property type="entry name" value="Elongation factor Ts"/>
    <property type="match status" value="1"/>
</dbReference>
<dbReference type="Gene3D" id="1.10.286.20">
    <property type="match status" value="1"/>
</dbReference>
<dbReference type="Gene3D" id="1.10.8.10">
    <property type="entry name" value="DNA helicase RuvA subunit, C-terminal domain"/>
    <property type="match status" value="1"/>
</dbReference>
<dbReference type="Gene3D" id="3.30.479.20">
    <property type="entry name" value="Elongation factor Ts, dimerisation domain"/>
    <property type="match status" value="2"/>
</dbReference>
<dbReference type="HAMAP" id="MF_00050">
    <property type="entry name" value="EF_Ts"/>
    <property type="match status" value="1"/>
</dbReference>
<dbReference type="InterPro" id="IPR036402">
    <property type="entry name" value="EF-Ts_dimer_sf"/>
</dbReference>
<dbReference type="InterPro" id="IPR001816">
    <property type="entry name" value="Transl_elong_EFTs/EF1B"/>
</dbReference>
<dbReference type="InterPro" id="IPR014039">
    <property type="entry name" value="Transl_elong_EFTs/EF1B_dimer"/>
</dbReference>
<dbReference type="InterPro" id="IPR018101">
    <property type="entry name" value="Transl_elong_Ts_CS"/>
</dbReference>
<dbReference type="InterPro" id="IPR009060">
    <property type="entry name" value="UBA-like_sf"/>
</dbReference>
<dbReference type="NCBIfam" id="TIGR00116">
    <property type="entry name" value="tsf"/>
    <property type="match status" value="1"/>
</dbReference>
<dbReference type="PANTHER" id="PTHR11741">
    <property type="entry name" value="ELONGATION FACTOR TS"/>
    <property type="match status" value="1"/>
</dbReference>
<dbReference type="PANTHER" id="PTHR11741:SF0">
    <property type="entry name" value="ELONGATION FACTOR TS, MITOCHONDRIAL"/>
    <property type="match status" value="1"/>
</dbReference>
<dbReference type="Pfam" id="PF00889">
    <property type="entry name" value="EF_TS"/>
    <property type="match status" value="1"/>
</dbReference>
<dbReference type="SUPFAM" id="SSF54713">
    <property type="entry name" value="Elongation factor Ts (EF-Ts), dimerisation domain"/>
    <property type="match status" value="2"/>
</dbReference>
<dbReference type="SUPFAM" id="SSF46934">
    <property type="entry name" value="UBA-like"/>
    <property type="match status" value="1"/>
</dbReference>
<dbReference type="PROSITE" id="PS01126">
    <property type="entry name" value="EF_TS_1"/>
    <property type="match status" value="1"/>
</dbReference>
<dbReference type="PROSITE" id="PS01127">
    <property type="entry name" value="EF_TS_2"/>
    <property type="match status" value="1"/>
</dbReference>
<proteinExistence type="inferred from homology"/>
<gene>
    <name evidence="1" type="primary">tsf</name>
    <name type="ordered locus">PputGB1_1147</name>
</gene>
<comment type="function">
    <text evidence="1">Associates with the EF-Tu.GDP complex and induces the exchange of GDP to GTP. It remains bound to the aminoacyl-tRNA.EF-Tu.GTP complex up to the GTP hydrolysis stage on the ribosome.</text>
</comment>
<comment type="subcellular location">
    <subcellularLocation>
        <location evidence="1">Cytoplasm</location>
    </subcellularLocation>
</comment>
<comment type="similarity">
    <text evidence="1">Belongs to the EF-Ts family.</text>
</comment>
<name>EFTS_PSEPG</name>
<sequence>MAAITAALVKELRERTGEGMMDCKKALEKAGGDIEKAIDDMRASGAIKAAKKAGNVAAEGAIAVKTDGKSAVLLEVNSQTDFLALQDDFKNFVAESLEEAFAQKLTDAAPLIASREAAREALVAKCGENVNIRRLVRVEGDVVGAYLHGNKIGAVVVLKGGDVELAKNIAMHVAASNPEFLDSSEISAEAIEREKGVFLQLNADKIAGKPENIVENMINGRITKFKAEASLKEQAFVMNPEVKVGELAKKAGAEIVSFTYFKVGEGIEKPVDDFAAEVAAQVAAAKQ</sequence>
<feature type="chain" id="PRO_1000074874" description="Elongation factor Ts">
    <location>
        <begin position="1"/>
        <end position="287"/>
    </location>
</feature>
<feature type="region of interest" description="Involved in Mg(2+) ion dislocation from EF-Tu" evidence="1">
    <location>
        <begin position="80"/>
        <end position="83"/>
    </location>
</feature>